<name>ISPE_STAAR</name>
<protein>
    <recommendedName>
        <fullName evidence="1">Putative 4-diphosphocytidyl-2-C-methyl-D-erythritol kinase</fullName>
        <shortName evidence="1">CMK</shortName>
        <ecNumber evidence="1">2.7.1.148</ecNumber>
    </recommendedName>
    <alternativeName>
        <fullName evidence="1">4-(cytidine-5'-diphospho)-2-C-methyl-D-erythritol kinase</fullName>
    </alternativeName>
</protein>
<proteinExistence type="inferred from homology"/>
<gene>
    <name type="ordered locus">SAR0496</name>
</gene>
<accession>Q6GJH6</accession>
<feature type="chain" id="PRO_0000189264" description="Putative 4-diphosphocytidyl-2-C-methyl-D-erythritol kinase">
    <location>
        <begin position="1"/>
        <end position="282"/>
    </location>
</feature>
<feature type="active site" evidence="1">
    <location>
        <position position="9"/>
    </location>
</feature>
<feature type="active site" evidence="1">
    <location>
        <position position="135"/>
    </location>
</feature>
<feature type="binding site" evidence="1">
    <location>
        <begin position="93"/>
        <end position="103"/>
    </location>
    <ligand>
        <name>ATP</name>
        <dbReference type="ChEBI" id="CHEBI:30616"/>
    </ligand>
</feature>
<reference key="1">
    <citation type="journal article" date="2004" name="Proc. Natl. Acad. Sci. U.S.A.">
        <title>Complete genomes of two clinical Staphylococcus aureus strains: evidence for the rapid evolution of virulence and drug resistance.</title>
        <authorList>
            <person name="Holden M.T.G."/>
            <person name="Feil E.J."/>
            <person name="Lindsay J.A."/>
            <person name="Peacock S.J."/>
            <person name="Day N.P.J."/>
            <person name="Enright M.C."/>
            <person name="Foster T.J."/>
            <person name="Moore C.E."/>
            <person name="Hurst L."/>
            <person name="Atkin R."/>
            <person name="Barron A."/>
            <person name="Bason N."/>
            <person name="Bentley S.D."/>
            <person name="Chillingworth C."/>
            <person name="Chillingworth T."/>
            <person name="Churcher C."/>
            <person name="Clark L."/>
            <person name="Corton C."/>
            <person name="Cronin A."/>
            <person name="Doggett J."/>
            <person name="Dowd L."/>
            <person name="Feltwell T."/>
            <person name="Hance Z."/>
            <person name="Harris B."/>
            <person name="Hauser H."/>
            <person name="Holroyd S."/>
            <person name="Jagels K."/>
            <person name="James K.D."/>
            <person name="Lennard N."/>
            <person name="Line A."/>
            <person name="Mayes R."/>
            <person name="Moule S."/>
            <person name="Mungall K."/>
            <person name="Ormond D."/>
            <person name="Quail M.A."/>
            <person name="Rabbinowitsch E."/>
            <person name="Rutherford K.M."/>
            <person name="Sanders M."/>
            <person name="Sharp S."/>
            <person name="Simmonds M."/>
            <person name="Stevens K."/>
            <person name="Whitehead S."/>
            <person name="Barrell B.G."/>
            <person name="Spratt B.G."/>
            <person name="Parkhill J."/>
        </authorList>
    </citation>
    <scope>NUCLEOTIDE SEQUENCE [LARGE SCALE GENOMIC DNA]</scope>
    <source>
        <strain>MRSA252</strain>
    </source>
</reference>
<evidence type="ECO:0000255" key="1">
    <source>
        <dbReference type="HAMAP-Rule" id="MF_00061"/>
    </source>
</evidence>
<dbReference type="EC" id="2.7.1.148" evidence="1"/>
<dbReference type="EMBL" id="BX571856">
    <property type="protein sequence ID" value="CAG39518.1"/>
    <property type="molecule type" value="Genomic_DNA"/>
</dbReference>
<dbReference type="SMR" id="Q6GJH6"/>
<dbReference type="KEGG" id="sar:SAR0496"/>
<dbReference type="HOGENOM" id="CLU_053057_1_1_9"/>
<dbReference type="Proteomes" id="UP000000596">
    <property type="component" value="Chromosome"/>
</dbReference>
<dbReference type="GO" id="GO:0050515">
    <property type="term" value="F:4-(cytidine 5'-diphospho)-2-C-methyl-D-erythritol kinase activity"/>
    <property type="evidence" value="ECO:0007669"/>
    <property type="project" value="UniProtKB-UniRule"/>
</dbReference>
<dbReference type="GO" id="GO:0005524">
    <property type="term" value="F:ATP binding"/>
    <property type="evidence" value="ECO:0007669"/>
    <property type="project" value="UniProtKB-UniRule"/>
</dbReference>
<dbReference type="GO" id="GO:0016114">
    <property type="term" value="P:terpenoid biosynthetic process"/>
    <property type="evidence" value="ECO:0007669"/>
    <property type="project" value="InterPro"/>
</dbReference>
<dbReference type="FunFam" id="3.30.230.10:FF:000029">
    <property type="entry name" value="4-diphosphocytidyl-2-C-methyl-D-erythritol kinase"/>
    <property type="match status" value="1"/>
</dbReference>
<dbReference type="FunFam" id="3.30.70.890:FF:000006">
    <property type="entry name" value="4-diphosphocytidyl-2-C-methyl-D-erythritol kinase"/>
    <property type="match status" value="1"/>
</dbReference>
<dbReference type="Gene3D" id="3.30.230.10">
    <property type="match status" value="1"/>
</dbReference>
<dbReference type="Gene3D" id="3.30.70.890">
    <property type="entry name" value="GHMP kinase, C-terminal domain"/>
    <property type="match status" value="1"/>
</dbReference>
<dbReference type="HAMAP" id="MF_00061">
    <property type="entry name" value="IspE"/>
    <property type="match status" value="1"/>
</dbReference>
<dbReference type="InterPro" id="IPR013750">
    <property type="entry name" value="GHMP_kinase_C_dom"/>
</dbReference>
<dbReference type="InterPro" id="IPR036554">
    <property type="entry name" value="GHMP_kinase_C_sf"/>
</dbReference>
<dbReference type="InterPro" id="IPR006204">
    <property type="entry name" value="GHMP_kinase_N_dom"/>
</dbReference>
<dbReference type="InterPro" id="IPR004424">
    <property type="entry name" value="IspE"/>
</dbReference>
<dbReference type="InterPro" id="IPR020568">
    <property type="entry name" value="Ribosomal_Su5_D2-typ_SF"/>
</dbReference>
<dbReference type="InterPro" id="IPR014721">
    <property type="entry name" value="Ribsml_uS5_D2-typ_fold_subgr"/>
</dbReference>
<dbReference type="NCBIfam" id="TIGR00154">
    <property type="entry name" value="ispE"/>
    <property type="match status" value="1"/>
</dbReference>
<dbReference type="PANTHER" id="PTHR43527">
    <property type="entry name" value="4-DIPHOSPHOCYTIDYL-2-C-METHYL-D-ERYTHRITOL KINASE, CHLOROPLASTIC"/>
    <property type="match status" value="1"/>
</dbReference>
<dbReference type="PANTHER" id="PTHR43527:SF2">
    <property type="entry name" value="4-DIPHOSPHOCYTIDYL-2-C-METHYL-D-ERYTHRITOL KINASE, CHLOROPLASTIC"/>
    <property type="match status" value="1"/>
</dbReference>
<dbReference type="Pfam" id="PF08544">
    <property type="entry name" value="GHMP_kinases_C"/>
    <property type="match status" value="1"/>
</dbReference>
<dbReference type="Pfam" id="PF00288">
    <property type="entry name" value="GHMP_kinases_N"/>
    <property type="match status" value="1"/>
</dbReference>
<dbReference type="PIRSF" id="PIRSF010376">
    <property type="entry name" value="IspE"/>
    <property type="match status" value="1"/>
</dbReference>
<dbReference type="SUPFAM" id="SSF55060">
    <property type="entry name" value="GHMP Kinase, C-terminal domain"/>
    <property type="match status" value="1"/>
</dbReference>
<dbReference type="SUPFAM" id="SSF54211">
    <property type="entry name" value="Ribosomal protein S5 domain 2-like"/>
    <property type="match status" value="1"/>
</dbReference>
<keyword id="KW-0067">ATP-binding</keyword>
<keyword id="KW-0418">Kinase</keyword>
<keyword id="KW-0547">Nucleotide-binding</keyword>
<keyword id="KW-0808">Transferase</keyword>
<organism>
    <name type="scientific">Staphylococcus aureus (strain MRSA252)</name>
    <dbReference type="NCBI Taxonomy" id="282458"/>
    <lineage>
        <taxon>Bacteria</taxon>
        <taxon>Bacillati</taxon>
        <taxon>Bacillota</taxon>
        <taxon>Bacilli</taxon>
        <taxon>Bacillales</taxon>
        <taxon>Staphylococcaceae</taxon>
        <taxon>Staphylococcus</taxon>
    </lineage>
</organism>
<comment type="function">
    <text evidence="1">Catalyzes the phosphorylation of the position 2 hydroxy group of 4-diphosphocytidyl-2C-methyl-D-erythritol.</text>
</comment>
<comment type="catalytic activity">
    <reaction evidence="1">
        <text>4-CDP-2-C-methyl-D-erythritol + ATP = 4-CDP-2-C-methyl-D-erythritol 2-phosphate + ADP + H(+)</text>
        <dbReference type="Rhea" id="RHEA:18437"/>
        <dbReference type="ChEBI" id="CHEBI:15378"/>
        <dbReference type="ChEBI" id="CHEBI:30616"/>
        <dbReference type="ChEBI" id="CHEBI:57823"/>
        <dbReference type="ChEBI" id="CHEBI:57919"/>
        <dbReference type="ChEBI" id="CHEBI:456216"/>
        <dbReference type="EC" id="2.7.1.148"/>
    </reaction>
</comment>
<comment type="similarity">
    <text evidence="1">Belongs to the GHMP kinase family. IspE subfamily.</text>
</comment>
<sequence>MIYETAPAKINFTLDTLFKRNDGYHEIEMIMTTVDLNDRLTFHKRKDRKIVVEIEHNYVPSNHKNLAYRAAQLFIEQYQLKQGVTISIDKEIPVSAGLAGGSADAAATLRGLNRLFNIGASLEELALLGSKIGTDIPFCIYNKTALCTGKGEKIEFLNKPPSAWVILAKPNLGISSPDIFKLINLDKRYDVHTKMCYEALENRDYQQLCQSLSNRLEPISVSKHPQIDKLKNNMLKSGADGALMSGSGPTVYGLAQKESQAKNIYNAVNGCCNEVYLVRLLG</sequence>